<name>EFTU_CORA7</name>
<feature type="chain" id="PRO_1000201397" description="Elongation factor Tu">
    <location>
        <begin position="1"/>
        <end position="396"/>
    </location>
</feature>
<feature type="domain" description="tr-type G">
    <location>
        <begin position="10"/>
        <end position="205"/>
    </location>
</feature>
<feature type="region of interest" description="G1" evidence="1">
    <location>
        <begin position="19"/>
        <end position="26"/>
    </location>
</feature>
<feature type="region of interest" description="G2" evidence="1">
    <location>
        <begin position="62"/>
        <end position="66"/>
    </location>
</feature>
<feature type="region of interest" description="G3" evidence="1">
    <location>
        <begin position="83"/>
        <end position="86"/>
    </location>
</feature>
<feature type="region of interest" description="G4" evidence="1">
    <location>
        <begin position="138"/>
        <end position="141"/>
    </location>
</feature>
<feature type="region of interest" description="G5" evidence="1">
    <location>
        <begin position="175"/>
        <end position="177"/>
    </location>
</feature>
<feature type="binding site" evidence="2">
    <location>
        <begin position="19"/>
        <end position="26"/>
    </location>
    <ligand>
        <name>GTP</name>
        <dbReference type="ChEBI" id="CHEBI:37565"/>
    </ligand>
</feature>
<feature type="binding site" evidence="2">
    <location>
        <position position="26"/>
    </location>
    <ligand>
        <name>Mg(2+)</name>
        <dbReference type="ChEBI" id="CHEBI:18420"/>
    </ligand>
</feature>
<feature type="binding site" evidence="2">
    <location>
        <begin position="83"/>
        <end position="87"/>
    </location>
    <ligand>
        <name>GTP</name>
        <dbReference type="ChEBI" id="CHEBI:37565"/>
    </ligand>
</feature>
<feature type="binding site" evidence="2">
    <location>
        <begin position="138"/>
        <end position="141"/>
    </location>
    <ligand>
        <name>GTP</name>
        <dbReference type="ChEBI" id="CHEBI:37565"/>
    </ligand>
</feature>
<protein>
    <recommendedName>
        <fullName evidence="2">Elongation factor Tu</fullName>
        <shortName evidence="2">EF-Tu</shortName>
        <ecNumber evidence="2">3.6.5.3</ecNumber>
    </recommendedName>
</protein>
<evidence type="ECO:0000250" key="1"/>
<evidence type="ECO:0000255" key="2">
    <source>
        <dbReference type="HAMAP-Rule" id="MF_00118"/>
    </source>
</evidence>
<dbReference type="EC" id="3.6.5.3" evidence="2"/>
<dbReference type="EMBL" id="CP001601">
    <property type="protein sequence ID" value="ACP31978.1"/>
    <property type="molecule type" value="Genomic_DNA"/>
</dbReference>
<dbReference type="RefSeq" id="WP_010189688.1">
    <property type="nucleotide sequence ID" value="NZ_ACLH01000068.1"/>
</dbReference>
<dbReference type="SMR" id="C3PKP2"/>
<dbReference type="STRING" id="548476.cauri_0379"/>
<dbReference type="GeneID" id="31922998"/>
<dbReference type="KEGG" id="car:cauri_0379"/>
<dbReference type="eggNOG" id="COG0050">
    <property type="taxonomic scope" value="Bacteria"/>
</dbReference>
<dbReference type="HOGENOM" id="CLU_007265_0_1_11"/>
<dbReference type="OrthoDB" id="9803139at2"/>
<dbReference type="Proteomes" id="UP000002077">
    <property type="component" value="Chromosome"/>
</dbReference>
<dbReference type="GO" id="GO:0005829">
    <property type="term" value="C:cytosol"/>
    <property type="evidence" value="ECO:0007669"/>
    <property type="project" value="TreeGrafter"/>
</dbReference>
<dbReference type="GO" id="GO:0005525">
    <property type="term" value="F:GTP binding"/>
    <property type="evidence" value="ECO:0007669"/>
    <property type="project" value="UniProtKB-UniRule"/>
</dbReference>
<dbReference type="GO" id="GO:0003924">
    <property type="term" value="F:GTPase activity"/>
    <property type="evidence" value="ECO:0007669"/>
    <property type="project" value="InterPro"/>
</dbReference>
<dbReference type="GO" id="GO:0003746">
    <property type="term" value="F:translation elongation factor activity"/>
    <property type="evidence" value="ECO:0007669"/>
    <property type="project" value="UniProtKB-UniRule"/>
</dbReference>
<dbReference type="CDD" id="cd01884">
    <property type="entry name" value="EF_Tu"/>
    <property type="match status" value="1"/>
</dbReference>
<dbReference type="CDD" id="cd03697">
    <property type="entry name" value="EFTU_II"/>
    <property type="match status" value="1"/>
</dbReference>
<dbReference type="CDD" id="cd03707">
    <property type="entry name" value="EFTU_III"/>
    <property type="match status" value="1"/>
</dbReference>
<dbReference type="FunFam" id="2.40.30.10:FF:000001">
    <property type="entry name" value="Elongation factor Tu"/>
    <property type="match status" value="1"/>
</dbReference>
<dbReference type="FunFam" id="3.40.50.300:FF:000003">
    <property type="entry name" value="Elongation factor Tu"/>
    <property type="match status" value="1"/>
</dbReference>
<dbReference type="Gene3D" id="3.40.50.300">
    <property type="entry name" value="P-loop containing nucleotide triphosphate hydrolases"/>
    <property type="match status" value="1"/>
</dbReference>
<dbReference type="Gene3D" id="2.40.30.10">
    <property type="entry name" value="Translation factors"/>
    <property type="match status" value="2"/>
</dbReference>
<dbReference type="HAMAP" id="MF_00118_B">
    <property type="entry name" value="EF_Tu_B"/>
    <property type="match status" value="1"/>
</dbReference>
<dbReference type="InterPro" id="IPR041709">
    <property type="entry name" value="EF-Tu_GTP-bd"/>
</dbReference>
<dbReference type="InterPro" id="IPR050055">
    <property type="entry name" value="EF-Tu_GTPase"/>
</dbReference>
<dbReference type="InterPro" id="IPR004161">
    <property type="entry name" value="EFTu-like_2"/>
</dbReference>
<dbReference type="InterPro" id="IPR033720">
    <property type="entry name" value="EFTU_2"/>
</dbReference>
<dbReference type="InterPro" id="IPR031157">
    <property type="entry name" value="G_TR_CS"/>
</dbReference>
<dbReference type="InterPro" id="IPR027417">
    <property type="entry name" value="P-loop_NTPase"/>
</dbReference>
<dbReference type="InterPro" id="IPR005225">
    <property type="entry name" value="Small_GTP-bd"/>
</dbReference>
<dbReference type="InterPro" id="IPR000795">
    <property type="entry name" value="T_Tr_GTP-bd_dom"/>
</dbReference>
<dbReference type="InterPro" id="IPR009000">
    <property type="entry name" value="Transl_B-barrel_sf"/>
</dbReference>
<dbReference type="InterPro" id="IPR009001">
    <property type="entry name" value="Transl_elong_EF1A/Init_IF2_C"/>
</dbReference>
<dbReference type="InterPro" id="IPR004541">
    <property type="entry name" value="Transl_elong_EFTu/EF1A_bac/org"/>
</dbReference>
<dbReference type="InterPro" id="IPR004160">
    <property type="entry name" value="Transl_elong_EFTu/EF1A_C"/>
</dbReference>
<dbReference type="NCBIfam" id="TIGR00485">
    <property type="entry name" value="EF-Tu"/>
    <property type="match status" value="1"/>
</dbReference>
<dbReference type="NCBIfam" id="NF000766">
    <property type="entry name" value="PRK00049.1"/>
    <property type="match status" value="1"/>
</dbReference>
<dbReference type="NCBIfam" id="NF009372">
    <property type="entry name" value="PRK12735.1"/>
    <property type="match status" value="1"/>
</dbReference>
<dbReference type="NCBIfam" id="NF009373">
    <property type="entry name" value="PRK12736.1"/>
    <property type="match status" value="1"/>
</dbReference>
<dbReference type="NCBIfam" id="TIGR00231">
    <property type="entry name" value="small_GTP"/>
    <property type="match status" value="1"/>
</dbReference>
<dbReference type="PANTHER" id="PTHR43721:SF22">
    <property type="entry name" value="ELONGATION FACTOR TU, MITOCHONDRIAL"/>
    <property type="match status" value="1"/>
</dbReference>
<dbReference type="PANTHER" id="PTHR43721">
    <property type="entry name" value="ELONGATION FACTOR TU-RELATED"/>
    <property type="match status" value="1"/>
</dbReference>
<dbReference type="Pfam" id="PF00009">
    <property type="entry name" value="GTP_EFTU"/>
    <property type="match status" value="1"/>
</dbReference>
<dbReference type="Pfam" id="PF03144">
    <property type="entry name" value="GTP_EFTU_D2"/>
    <property type="match status" value="1"/>
</dbReference>
<dbReference type="Pfam" id="PF03143">
    <property type="entry name" value="GTP_EFTU_D3"/>
    <property type="match status" value="1"/>
</dbReference>
<dbReference type="PRINTS" id="PR00315">
    <property type="entry name" value="ELONGATNFCT"/>
</dbReference>
<dbReference type="SUPFAM" id="SSF50465">
    <property type="entry name" value="EF-Tu/eEF-1alpha/eIF2-gamma C-terminal domain"/>
    <property type="match status" value="1"/>
</dbReference>
<dbReference type="SUPFAM" id="SSF52540">
    <property type="entry name" value="P-loop containing nucleoside triphosphate hydrolases"/>
    <property type="match status" value="1"/>
</dbReference>
<dbReference type="SUPFAM" id="SSF50447">
    <property type="entry name" value="Translation proteins"/>
    <property type="match status" value="1"/>
</dbReference>
<dbReference type="PROSITE" id="PS00301">
    <property type="entry name" value="G_TR_1"/>
    <property type="match status" value="1"/>
</dbReference>
<dbReference type="PROSITE" id="PS51722">
    <property type="entry name" value="G_TR_2"/>
    <property type="match status" value="1"/>
</dbReference>
<gene>
    <name evidence="2" type="primary">tuf</name>
    <name type="ordered locus">cauri_0379</name>
</gene>
<keyword id="KW-0963">Cytoplasm</keyword>
<keyword id="KW-0251">Elongation factor</keyword>
<keyword id="KW-0342">GTP-binding</keyword>
<keyword id="KW-0378">Hydrolase</keyword>
<keyword id="KW-0460">Magnesium</keyword>
<keyword id="KW-0479">Metal-binding</keyword>
<keyword id="KW-0547">Nucleotide-binding</keyword>
<keyword id="KW-0648">Protein biosynthesis</keyword>
<keyword id="KW-1185">Reference proteome</keyword>
<comment type="function">
    <text evidence="2">GTP hydrolase that promotes the GTP-dependent binding of aminoacyl-tRNA to the A-site of ribosomes during protein biosynthesis.</text>
</comment>
<comment type="catalytic activity">
    <reaction evidence="2">
        <text>GTP + H2O = GDP + phosphate + H(+)</text>
        <dbReference type="Rhea" id="RHEA:19669"/>
        <dbReference type="ChEBI" id="CHEBI:15377"/>
        <dbReference type="ChEBI" id="CHEBI:15378"/>
        <dbReference type="ChEBI" id="CHEBI:37565"/>
        <dbReference type="ChEBI" id="CHEBI:43474"/>
        <dbReference type="ChEBI" id="CHEBI:58189"/>
        <dbReference type="EC" id="3.6.5.3"/>
    </reaction>
    <physiologicalReaction direction="left-to-right" evidence="2">
        <dbReference type="Rhea" id="RHEA:19670"/>
    </physiologicalReaction>
</comment>
<comment type="subunit">
    <text evidence="2">Monomer.</text>
</comment>
<comment type="subcellular location">
    <subcellularLocation>
        <location evidence="2">Cytoplasm</location>
    </subcellularLocation>
</comment>
<comment type="similarity">
    <text evidence="2">Belongs to the TRAFAC class translation factor GTPase superfamily. Classic translation factor GTPase family. EF-Tu/EF-1A subfamily.</text>
</comment>
<proteinExistence type="inferred from homology"/>
<reference key="1">
    <citation type="journal article" date="2010" name="BMC Genomics">
        <title>Complete genome sequence and lifestyle of black-pigmented Corynebacterium aurimucosum ATCC 700975 (formerly C. nigricans CN-1) isolated from a vaginal swab of a woman with spontaneous abortion.</title>
        <authorList>
            <person name="Trost E."/>
            <person name="Gotker S."/>
            <person name="Schneider J."/>
            <person name="Schneiker-Bekel S."/>
            <person name="Szczepanowski R."/>
            <person name="Tilker A."/>
            <person name="Viehoever P."/>
            <person name="Arnold W."/>
            <person name="Bekel T."/>
            <person name="Blom J."/>
            <person name="Gartemann K.H."/>
            <person name="Linke B."/>
            <person name="Goesmann A."/>
            <person name="Puhler A."/>
            <person name="Shukla S.K."/>
            <person name="Tauch A."/>
        </authorList>
    </citation>
    <scope>NUCLEOTIDE SEQUENCE [LARGE SCALE GENOMIC DNA]</scope>
    <source>
        <strain>ATCC 700975 / DSM 44827 / CIP 107346 / CN-1</strain>
    </source>
</reference>
<accession>C3PKP2</accession>
<organism>
    <name type="scientific">Corynebacterium aurimucosum (strain ATCC 700975 / DSM 44827 / CIP 107346 / CN-1)</name>
    <name type="common">Corynebacterium nigricans</name>
    <dbReference type="NCBI Taxonomy" id="548476"/>
    <lineage>
        <taxon>Bacteria</taxon>
        <taxon>Bacillati</taxon>
        <taxon>Actinomycetota</taxon>
        <taxon>Actinomycetes</taxon>
        <taxon>Mycobacteriales</taxon>
        <taxon>Corynebacteriaceae</taxon>
        <taxon>Corynebacterium</taxon>
    </lineage>
</organism>
<sequence>MAKEKFERTKPHVNIGTIGHVDHGKTTTTAAITKVLADAYPEENTAFAFDMIDKAPEEKERGITINISHVEYSTPKRHYAHVDAPGHADYIKNMITGAAQMDGAILVVAATDGPMPQTREHVLLARQVGVPYILVALNKCDMVDDEEIIELVEMEIRELLAEQDYDEEAPIVHISALKALEGDEKWVQSVIDLMQACDDSIPDPERELDKPFLMPIEDIFTITGRGTVVTGRVERGSLNVNEDIEIIGIKDKSMSTTVTGIEMFRKMMDYTEAGDNCGLLLRGTKREEVERGQVCIKPGAYTPHTKFEGSVYVLKKEEGGRHTPFMDNYRPQFYFRTTDVTGVIKLPEGTEMVMPGDNVEMSVELIQPVAMDEGLRFAIREGSRTVGAGRVTKILD</sequence>